<keyword id="KW-0002">3D-structure</keyword>
<keyword id="KW-0007">Acetylation</keyword>
<keyword id="KW-0025">Alternative splicing</keyword>
<keyword id="KW-0153">Cholesterol metabolism</keyword>
<keyword id="KW-0903">Direct protein sequencing</keyword>
<keyword id="KW-0225">Disease variant</keyword>
<keyword id="KW-1015">Disulfide bond</keyword>
<keyword id="KW-0256">Endoplasmic reticulum</keyword>
<keyword id="KW-0325">Glycoprotein</keyword>
<keyword id="KW-0443">Lipid metabolism</keyword>
<keyword id="KW-0445">Lipid transport</keyword>
<keyword id="KW-0458">Lysosome</keyword>
<keyword id="KW-1054">Niemann-Pick disease</keyword>
<keyword id="KW-1267">Proteomics identification</keyword>
<keyword id="KW-1185">Reference proteome</keyword>
<keyword id="KW-0964">Secreted</keyword>
<keyword id="KW-0732">Signal</keyword>
<keyword id="KW-0753">Steroid metabolism</keyword>
<keyword id="KW-1207">Sterol metabolism</keyword>
<keyword id="KW-0813">Transport</keyword>
<proteinExistence type="evidence at protein level"/>
<sequence>MRFLAATFLLLALSTAAQAEPVQFKDCGSVDGVIKEVNVSPCPTQPCQLSKGQSYSVNVTFTSNIQSKSSKAVVHGILMGVPVPFPIPEPDGCKSGINCPIQKDKTYSYLNKLPVKSEYPSIKLVVEWQLQDDKNQSLFCWEIPVQIVSHL</sequence>
<organism>
    <name type="scientific">Homo sapiens</name>
    <name type="common">Human</name>
    <dbReference type="NCBI Taxonomy" id="9606"/>
    <lineage>
        <taxon>Eukaryota</taxon>
        <taxon>Metazoa</taxon>
        <taxon>Chordata</taxon>
        <taxon>Craniata</taxon>
        <taxon>Vertebrata</taxon>
        <taxon>Euteleostomi</taxon>
        <taxon>Mammalia</taxon>
        <taxon>Eutheria</taxon>
        <taxon>Euarchontoglires</taxon>
        <taxon>Primates</taxon>
        <taxon>Haplorrhini</taxon>
        <taxon>Catarrhini</taxon>
        <taxon>Hominidae</taxon>
        <taxon>Homo</taxon>
    </lineage>
</organism>
<name>NPC2_HUMAN</name>
<accession>P61916</accession>
<accession>B4DQV7</accession>
<accession>Q15668</accession>
<accession>Q29413</accession>
<comment type="function">
    <text evidence="2 3 8 11 12 13 19 21">Intracellular cholesterol transporter which acts in concert with NPC1 and plays an important role in the egress of cholesterol from the lysosomal compartment (PubMed:11125141, PubMed:15937921, PubMed:17018531, PubMed:18772377, PubMed:29580834). Unesterified cholesterol that has been released from LDLs in the lumen of the late endosomes/lysosomes is transferred by NPC2 to the cholesterol-binding pocket in the N-terminal domain of NPC1 (PubMed:17018531, PubMed:18772377, PubMed:27238017). May bind and mobilize cholesterol that is associated with membranes (PubMed:18823126). NPC2 binds cholesterol with a 1:1 stoichiometry (PubMed:17018531). Can bind a variety of sterols, including lathosterol, desmosterol and the plant sterols stigmasterol and beta-sitosterol (PubMed:17018531). The secreted form of NCP2 regulates biliary cholesterol secretion via stimulation of ABCG5/ABCG8-mediated cholesterol transport (By similarity).</text>
</comment>
<comment type="catalytic activity">
    <reaction evidence="12">
        <text>cholesterol(in) = cholesterol(out)</text>
        <dbReference type="Rhea" id="RHEA:39747"/>
        <dbReference type="ChEBI" id="CHEBI:16113"/>
    </reaction>
    <physiologicalReaction direction="left-to-right" evidence="12">
        <dbReference type="Rhea" id="RHEA:39748"/>
    </physiologicalReaction>
</comment>
<comment type="subunit">
    <text evidence="7 12 15 16 18 19 20">Interacts with NPC1 (via the second lumenal domain) in a cholestrol-dependent manner (PubMed:18772377, PubMed:27238017, PubMed:27551080). Interacts with NUS1/NgBR, the interaction stabilizes NCP2 and regulates cholesterol trafficking (PubMed:19723497). Interacts with DHDDS (PubMed:15110773). Interacts with NEDD4L (via C2 domain) (PubMed:19664597). Interacts with NPC1L1 (PubMed:22095670).</text>
</comment>
<comment type="interaction">
    <interactant intactId="EBI-2368946">
        <id>P61916</id>
    </interactant>
    <interactant intactId="EBI-4314838">
        <id>Q7Z3B1</id>
        <label>NEGR1</label>
    </interactant>
    <organismsDiffer>false</organismsDiffer>
    <experiments>9</experiments>
</comment>
<comment type="interaction">
    <interactant intactId="EBI-2368946">
        <id>P61916</id>
    </interactant>
    <interactant intactId="EBI-2368710">
        <id>O15118</id>
        <label>NPC1</label>
    </interactant>
    <organismsDiffer>false</organismsDiffer>
    <experiments>3</experiments>
</comment>
<comment type="subcellular location">
    <subcellularLocation>
        <location evidence="3 8 16 17">Secreted</location>
    </subcellularLocation>
    <subcellularLocation>
        <location evidence="16">Endoplasmic reticulum</location>
    </subcellularLocation>
    <subcellularLocation>
        <location evidence="8 16 27">Lysosome</location>
    </subcellularLocation>
    <text evidence="27">Interaction with cell-surface M6PR mediates endocytosis and targeting to lysosomes.</text>
</comment>
<comment type="alternative products">
    <event type="alternative splicing"/>
    <isoform>
        <id>P61916-1</id>
        <name>1</name>
        <sequence type="displayed"/>
    </isoform>
    <isoform>
        <id>P61916-2</id>
        <name>2</name>
        <sequence type="described" ref="VSP_056459"/>
    </isoform>
</comment>
<comment type="tissue specificity">
    <text evidence="3 15 17">Detected in gallbladder bile (PubMed:21315718). Detected in fibroblasts, kidney, liver, spleen, small intestine, placenta and testis (at protein level) (PubMed:11125141). Epididymis.</text>
</comment>
<comment type="induction">
    <text evidence="10">Down-regulated in response to enterovirus 71 (EV71) infection.</text>
</comment>
<comment type="domain">
    <text evidence="1">Binds cholesterol in a hydrophobic pocket; there are no hydrogen bonds between the sterol and the protein.</text>
</comment>
<comment type="disease" evidence="3 4 5 6 8 9 12">
    <disease id="DI-02056">
        <name>Niemann-Pick disease C2</name>
        <acronym>NPC2</acronym>
        <description>A lysosomal storage disorder that affects the viscera and the central nervous system. It is due to defective intracellular processing and transport of low-density lipoprotein derived cholesterol. It causes accumulation of cholesterol in lysosomes, with delayed induction of cholesterol homeostatic reactions. Niemann-Pick disease type C2 has a highly variable clinical phenotype. Clinical features include variable hepatosplenomegaly and severe progressive neurological dysfunction such as ataxia, dystonia and dementia. The age of onset can vary from infancy to late adulthood.</description>
        <dbReference type="MIM" id="607625"/>
    </disease>
    <text>The disease is caused by variants affecting the gene represented in this entry.</text>
</comment>
<comment type="similarity">
    <text evidence="26">Belongs to the NPC2 family.</text>
</comment>
<dbReference type="EMBL" id="X67698">
    <property type="protein sequence ID" value="CAA47928.1"/>
    <property type="molecule type" value="mRNA"/>
</dbReference>
<dbReference type="EMBL" id="AK298975">
    <property type="protein sequence ID" value="BAG61069.1"/>
    <property type="molecule type" value="mRNA"/>
</dbReference>
<dbReference type="EMBL" id="AC005479">
    <property type="status" value="NOT_ANNOTATED_CDS"/>
    <property type="molecule type" value="Genomic_DNA"/>
</dbReference>
<dbReference type="EMBL" id="BC002532">
    <property type="protein sequence ID" value="AAH02532.1"/>
    <property type="molecule type" value="mRNA"/>
</dbReference>
<dbReference type="CCDS" id="CCDS32121.1">
    <molecule id="P61916-1"/>
</dbReference>
<dbReference type="CCDS" id="CCDS91904.1">
    <molecule id="P61916-2"/>
</dbReference>
<dbReference type="PIR" id="I38365">
    <property type="entry name" value="I38365"/>
</dbReference>
<dbReference type="RefSeq" id="NP_001362369.1">
    <molecule id="P61916-2"/>
    <property type="nucleotide sequence ID" value="NM_001375440.1"/>
</dbReference>
<dbReference type="RefSeq" id="NP_006423.1">
    <molecule id="P61916-1"/>
    <property type="nucleotide sequence ID" value="NM_006432.5"/>
</dbReference>
<dbReference type="PDB" id="5KWY">
    <property type="method" value="X-ray"/>
    <property type="resolution" value="2.40 A"/>
    <property type="chains" value="C/D=20-151"/>
</dbReference>
<dbReference type="PDB" id="6W5V">
    <property type="method" value="EM"/>
    <property type="resolution" value="4.00 A"/>
    <property type="chains" value="D=1-151"/>
</dbReference>
<dbReference type="PDBsum" id="5KWY"/>
<dbReference type="PDBsum" id="6W5V"/>
<dbReference type="EMDB" id="EMD-21549"/>
<dbReference type="SMR" id="P61916"/>
<dbReference type="BioGRID" id="115828">
    <property type="interactions" value="60"/>
</dbReference>
<dbReference type="FunCoup" id="P61916">
    <property type="interactions" value="888"/>
</dbReference>
<dbReference type="IntAct" id="P61916">
    <property type="interactions" value="35"/>
</dbReference>
<dbReference type="MINT" id="P61916"/>
<dbReference type="STRING" id="9606.ENSP00000451206"/>
<dbReference type="SwissLipids" id="SLP:000000475"/>
<dbReference type="TCDB" id="2.A.6.6.1">
    <property type="family name" value="the resistance-nodulation-cell division (rnd) superfamily"/>
</dbReference>
<dbReference type="GlyConnect" id="1215">
    <property type="glycosylation" value="2 N-Linked glycans (1 site)"/>
</dbReference>
<dbReference type="GlyCosmos" id="P61916">
    <property type="glycosylation" value="2 sites, 2 glycans"/>
</dbReference>
<dbReference type="GlyGen" id="P61916">
    <property type="glycosylation" value="5 sites, 31 N-linked glycans (2 sites), 1 O-linked glycan (1 site)"/>
</dbReference>
<dbReference type="iPTMnet" id="P61916"/>
<dbReference type="MetOSite" id="P61916"/>
<dbReference type="PhosphoSitePlus" id="P61916"/>
<dbReference type="SwissPalm" id="P61916"/>
<dbReference type="BioMuta" id="NPC2"/>
<dbReference type="DMDM" id="48429027"/>
<dbReference type="jPOST" id="P61916"/>
<dbReference type="MassIVE" id="P61916"/>
<dbReference type="PaxDb" id="9606-ENSP00000451112"/>
<dbReference type="PeptideAtlas" id="P61916"/>
<dbReference type="ProteomicsDB" id="4905"/>
<dbReference type="ProteomicsDB" id="57337">
    <molecule id="P61916-1"/>
</dbReference>
<dbReference type="Pumba" id="P61916"/>
<dbReference type="TopDownProteomics" id="P61916-2">
    <molecule id="P61916-2"/>
</dbReference>
<dbReference type="Antibodypedia" id="88">
    <property type="antibodies" value="321 antibodies from 33 providers"/>
</dbReference>
<dbReference type="DNASU" id="10577"/>
<dbReference type="Ensembl" id="ENST00000541064.5">
    <molecule id="P61916-2"/>
    <property type="protein sequence ID" value="ENSP00000442488.1"/>
    <property type="gene ID" value="ENSG00000119655.11"/>
</dbReference>
<dbReference type="Ensembl" id="ENST00000555619.6">
    <molecule id="P61916-1"/>
    <property type="protein sequence ID" value="ENSP00000451112.2"/>
    <property type="gene ID" value="ENSG00000119655.11"/>
</dbReference>
<dbReference type="GeneID" id="10577"/>
<dbReference type="KEGG" id="hsa:10577"/>
<dbReference type="MANE-Select" id="ENST00000555619.6">
    <property type="protein sequence ID" value="ENSP00000451112.2"/>
    <property type="RefSeq nucleotide sequence ID" value="NM_006432.5"/>
    <property type="RefSeq protein sequence ID" value="NP_006423.1"/>
</dbReference>
<dbReference type="UCSC" id="uc001xpy.4">
    <molecule id="P61916-1"/>
    <property type="organism name" value="human"/>
</dbReference>
<dbReference type="AGR" id="HGNC:14537"/>
<dbReference type="CTD" id="10577"/>
<dbReference type="DisGeNET" id="10577"/>
<dbReference type="GeneCards" id="NPC2"/>
<dbReference type="GeneReviews" id="NPC2"/>
<dbReference type="HGNC" id="HGNC:14537">
    <property type="gene designation" value="NPC2"/>
</dbReference>
<dbReference type="HPA" id="ENSG00000119655">
    <property type="expression patterns" value="Tissue enriched (epididymis)"/>
</dbReference>
<dbReference type="MalaCards" id="NPC2"/>
<dbReference type="MIM" id="601015">
    <property type="type" value="gene"/>
</dbReference>
<dbReference type="MIM" id="607625">
    <property type="type" value="phenotype"/>
</dbReference>
<dbReference type="neXtProt" id="NX_P61916"/>
<dbReference type="OpenTargets" id="ENSG00000119655"/>
<dbReference type="Orphanet" id="216986">
    <property type="disease" value="Niemann-Pick disease type C, adult neurologic onset"/>
</dbReference>
<dbReference type="Orphanet" id="216981">
    <property type="disease" value="Niemann-Pick disease type C, juvenile neurologic onset"/>
</dbReference>
<dbReference type="Orphanet" id="216978">
    <property type="disease" value="Niemann-Pick disease type C, late infantile neurologic onset"/>
</dbReference>
<dbReference type="Orphanet" id="216975">
    <property type="disease" value="Niemann-Pick disease type C, severe early infantile neurologic onset"/>
</dbReference>
<dbReference type="Orphanet" id="216972">
    <property type="disease" value="Niemann-Pick disease type C, severe perinatal form"/>
</dbReference>
<dbReference type="PharmGKB" id="PA31700"/>
<dbReference type="VEuPathDB" id="HostDB:ENSG00000119655"/>
<dbReference type="eggNOG" id="KOG4063">
    <property type="taxonomic scope" value="Eukaryota"/>
</dbReference>
<dbReference type="GeneTree" id="ENSGT00390000006223"/>
<dbReference type="InParanoid" id="P61916"/>
<dbReference type="OMA" id="QNLFCWE"/>
<dbReference type="OrthoDB" id="6489092at2759"/>
<dbReference type="PAN-GO" id="P61916">
    <property type="GO annotations" value="3 GO annotations based on evolutionary models"/>
</dbReference>
<dbReference type="PhylomeDB" id="P61916"/>
<dbReference type="TreeFam" id="TF317963"/>
<dbReference type="PathwayCommons" id="P61916"/>
<dbReference type="Reactome" id="R-HSA-6798695">
    <property type="pathway name" value="Neutrophil degranulation"/>
</dbReference>
<dbReference type="Reactome" id="R-HSA-8964038">
    <property type="pathway name" value="LDL clearance"/>
</dbReference>
<dbReference type="SignaLink" id="P61916"/>
<dbReference type="SIGNOR" id="P61916"/>
<dbReference type="BioGRID-ORCS" id="10577">
    <property type="hits" value="21 hits in 1180 CRISPR screens"/>
</dbReference>
<dbReference type="ChiTaRS" id="NPC2">
    <property type="organism name" value="human"/>
</dbReference>
<dbReference type="GenomeRNAi" id="10577"/>
<dbReference type="Pharos" id="P61916">
    <property type="development level" value="Tbio"/>
</dbReference>
<dbReference type="PRO" id="PR:P61916"/>
<dbReference type="Proteomes" id="UP000005640">
    <property type="component" value="Chromosome 14"/>
</dbReference>
<dbReference type="RNAct" id="P61916">
    <property type="molecule type" value="protein"/>
</dbReference>
<dbReference type="Bgee" id="ENSG00000119655">
    <property type="expression patterns" value="Expressed in corpus epididymis and 209 other cell types or tissues"/>
</dbReference>
<dbReference type="ExpressionAtlas" id="P61916">
    <property type="expression patterns" value="baseline and differential"/>
</dbReference>
<dbReference type="GO" id="GO:0035578">
    <property type="term" value="C:azurophil granule lumen"/>
    <property type="evidence" value="ECO:0000304"/>
    <property type="project" value="Reactome"/>
</dbReference>
<dbReference type="GO" id="GO:0005783">
    <property type="term" value="C:endoplasmic reticulum"/>
    <property type="evidence" value="ECO:0007669"/>
    <property type="project" value="UniProtKB-SubCell"/>
</dbReference>
<dbReference type="GO" id="GO:0070062">
    <property type="term" value="C:extracellular exosome"/>
    <property type="evidence" value="ECO:0007005"/>
    <property type="project" value="UniProtKB"/>
</dbReference>
<dbReference type="GO" id="GO:0005576">
    <property type="term" value="C:extracellular region"/>
    <property type="evidence" value="ECO:0000304"/>
    <property type="project" value="Reactome"/>
</dbReference>
<dbReference type="GO" id="GO:0005615">
    <property type="term" value="C:extracellular space"/>
    <property type="evidence" value="ECO:0000315"/>
    <property type="project" value="UniProtKB"/>
</dbReference>
<dbReference type="GO" id="GO:0043202">
    <property type="term" value="C:lysosomal lumen"/>
    <property type="evidence" value="ECO:0000304"/>
    <property type="project" value="Reactome"/>
</dbReference>
<dbReference type="GO" id="GO:0005764">
    <property type="term" value="C:lysosome"/>
    <property type="evidence" value="ECO:0000314"/>
    <property type="project" value="UniProtKB"/>
</dbReference>
<dbReference type="GO" id="GO:0015485">
    <property type="term" value="F:cholesterol binding"/>
    <property type="evidence" value="ECO:0000314"/>
    <property type="project" value="UniProtKB"/>
</dbReference>
<dbReference type="GO" id="GO:0120020">
    <property type="term" value="F:cholesterol transfer activity"/>
    <property type="evidence" value="ECO:0000314"/>
    <property type="project" value="BHF-UCL"/>
</dbReference>
<dbReference type="GO" id="GO:0019899">
    <property type="term" value="F:enzyme binding"/>
    <property type="evidence" value="ECO:0000353"/>
    <property type="project" value="UniProtKB"/>
</dbReference>
<dbReference type="GO" id="GO:0033344">
    <property type="term" value="P:cholesterol efflux"/>
    <property type="evidence" value="ECO:0000314"/>
    <property type="project" value="BHF-UCL"/>
</dbReference>
<dbReference type="GO" id="GO:0042632">
    <property type="term" value="P:cholesterol homeostasis"/>
    <property type="evidence" value="ECO:0000314"/>
    <property type="project" value="UniProtKB"/>
</dbReference>
<dbReference type="GO" id="GO:0008203">
    <property type="term" value="P:cholesterol metabolic process"/>
    <property type="evidence" value="ECO:0007669"/>
    <property type="project" value="UniProtKB-KW"/>
</dbReference>
<dbReference type="GO" id="GO:0010878">
    <property type="term" value="P:cholesterol storage"/>
    <property type="evidence" value="ECO:0007669"/>
    <property type="project" value="Ensembl"/>
</dbReference>
<dbReference type="GO" id="GO:0030301">
    <property type="term" value="P:cholesterol transport"/>
    <property type="evidence" value="ECO:0000314"/>
    <property type="project" value="UniProtKB"/>
</dbReference>
<dbReference type="GO" id="GO:0010467">
    <property type="term" value="P:gene expression"/>
    <property type="evidence" value="ECO:0007669"/>
    <property type="project" value="Ensembl"/>
</dbReference>
<dbReference type="GO" id="GO:0046836">
    <property type="term" value="P:glycolipid transport"/>
    <property type="evidence" value="ECO:0000304"/>
    <property type="project" value="HGNC-UCL"/>
</dbReference>
<dbReference type="GO" id="GO:0032367">
    <property type="term" value="P:intracellular cholesterol transport"/>
    <property type="evidence" value="ECO:0000314"/>
    <property type="project" value="UniProtKB"/>
</dbReference>
<dbReference type="GO" id="GO:0032366">
    <property type="term" value="P:intracellular sterol transport"/>
    <property type="evidence" value="ECO:0000314"/>
    <property type="project" value="HGNC-UCL"/>
</dbReference>
<dbReference type="GO" id="GO:0015914">
    <property type="term" value="P:phospholipid transport"/>
    <property type="evidence" value="ECO:0000304"/>
    <property type="project" value="HGNC-UCL"/>
</dbReference>
<dbReference type="GO" id="GO:0019747">
    <property type="term" value="P:regulation of isoprenoid metabolic process"/>
    <property type="evidence" value="ECO:0000304"/>
    <property type="project" value="UniProtKB"/>
</dbReference>
<dbReference type="GO" id="GO:0009615">
    <property type="term" value="P:response to virus"/>
    <property type="evidence" value="ECO:0000270"/>
    <property type="project" value="UniProtKB"/>
</dbReference>
<dbReference type="CDD" id="cd00916">
    <property type="entry name" value="Npc2_like"/>
    <property type="match status" value="1"/>
</dbReference>
<dbReference type="FunFam" id="2.60.40.770:FF:000001">
    <property type="entry name" value="NPC intracellular cholesterol transporter 2"/>
    <property type="match status" value="1"/>
</dbReference>
<dbReference type="Gene3D" id="2.60.40.770">
    <property type="match status" value="1"/>
</dbReference>
<dbReference type="InterPro" id="IPR014756">
    <property type="entry name" value="Ig_E-set"/>
</dbReference>
<dbReference type="InterPro" id="IPR003172">
    <property type="entry name" value="ML_dom"/>
</dbReference>
<dbReference type="InterPro" id="IPR033916">
    <property type="entry name" value="ML_Npc2-like"/>
</dbReference>
<dbReference type="InterPro" id="IPR039670">
    <property type="entry name" value="NPC2-like"/>
</dbReference>
<dbReference type="PANTHER" id="PTHR11306">
    <property type="entry name" value="NIEMANN PICK TYPE C2 PROTEIN NPC2-RELATED"/>
    <property type="match status" value="1"/>
</dbReference>
<dbReference type="PANTHER" id="PTHR11306:SF68">
    <property type="entry name" value="NPC INTRACELLULAR CHOLESTEROL TRANSPORTER 2"/>
    <property type="match status" value="1"/>
</dbReference>
<dbReference type="Pfam" id="PF02221">
    <property type="entry name" value="E1_DerP2_DerF2"/>
    <property type="match status" value="1"/>
</dbReference>
<dbReference type="SMART" id="SM00737">
    <property type="entry name" value="ML"/>
    <property type="match status" value="1"/>
</dbReference>
<dbReference type="SUPFAM" id="SSF81296">
    <property type="entry name" value="E set domains"/>
    <property type="match status" value="1"/>
</dbReference>
<feature type="signal peptide" evidence="3 11">
    <location>
        <begin position="1"/>
        <end position="19"/>
    </location>
</feature>
<feature type="chain" id="PRO_0000019854" description="NPC intracellular cholesterol transporter 2">
    <location>
        <begin position="20"/>
        <end position="151"/>
    </location>
</feature>
<feature type="modified residue" description="N6-acetyllysine" evidence="2">
    <location>
        <position position="116"/>
    </location>
</feature>
<feature type="glycosylation site" description="N-linked (GlcNAc...) asparagine" evidence="11 20 29">
    <location>
        <position position="58"/>
    </location>
</feature>
<feature type="glycosylation site" description="N-linked (GlcNAc...) asparagine" evidence="11 14 20 29">
    <location>
        <position position="135"/>
    </location>
</feature>
<feature type="disulfide bond" evidence="20 29">
    <location>
        <begin position="27"/>
        <end position="140"/>
    </location>
</feature>
<feature type="disulfide bond" evidence="20 29">
    <location>
        <begin position="42"/>
        <end position="47"/>
    </location>
</feature>
<feature type="disulfide bond" evidence="20 29">
    <location>
        <begin position="93"/>
        <end position="99"/>
    </location>
</feature>
<feature type="splice variant" id="VSP_056459" description="In isoform 2." evidence="23">
    <location>
        <begin position="122"/>
        <end position="147"/>
    </location>
</feature>
<feature type="sequence variant" id="VAR_043303" description="In NPC2; dbSNP:rs151220873." evidence="6">
    <original>V</original>
    <variation>M</variation>
    <location>
        <position position="30"/>
    </location>
</feature>
<feature type="sequence variant" id="VAR_015848" description="In NPC2; results in the synthesis of functional recombinant proteins correctly targeted to lysosomes; dbSNP:rs80358261." evidence="5 8">
    <original>V</original>
    <variation>M</variation>
    <location>
        <position position="39"/>
    </location>
</feature>
<feature type="sequence variant" id="VAR_043304" description="In NPC2; leads to the synthesis of misfolded recombinant proteins that colocalized with an endoplasmic reticulum marker; normally secreted but unable to correct cholesterol storage in NPC2-deficient cells; dbSNP:rs1555345993." evidence="6 8">
    <original>C</original>
    <variation>F</variation>
    <location>
        <position position="47"/>
    </location>
</feature>
<feature type="sequence variant" id="VAR_015849" description="In NPC2; leads to the synthesis of misfolded recombinant proteins that colocalized with an endoplasmic reticulum marker; normally secreted but unable to correct cholesterol storage in NPC2-deficient cells; dbSNP:rs11694." evidence="4 8">
    <original>S</original>
    <variation>P</variation>
    <location>
        <position position="67"/>
    </location>
</feature>
<feature type="sequence variant" id="VAR_011899" description="In dbSNP:rs4688.">
    <original>P</original>
    <variation>L</variation>
    <location>
        <position position="86"/>
    </location>
</feature>
<feature type="sequence variant" id="VAR_043305" description="In NPC2; leads to the synthesis of misfolded recombinant proteins that colocalized with an endoplasmic reticulum marker; normally secreted but unable to correct cholesterol storage in NPC2-deficient cells; dbSNP:rs143960270." evidence="6 8">
    <original>C</original>
    <variation>F</variation>
    <location>
        <position position="93"/>
    </location>
</feature>
<feature type="sequence variant" id="VAR_043306" description="In NPC2; leads to the synthesis of misfolded recombinant proteins that colocalized with an endoplasmic reticulum marker; normally secreted but unable to correct cholesterol storage in NPC2-deficient cells; dbSNP:rs80358264." evidence="8">
    <original>C</original>
    <variation>R</variation>
    <location>
        <position position="99"/>
    </location>
</feature>
<feature type="sequence variant" id="VAR_043307" description="In NPC2; unable to bind cholesterol; dbSNP:rs104894458." evidence="9 12">
    <original>P</original>
    <variation>S</variation>
    <location>
        <position position="120"/>
    </location>
</feature>
<feature type="strand" evidence="30">
    <location>
        <begin position="25"/>
        <end position="27"/>
    </location>
</feature>
<feature type="strand" evidence="30">
    <location>
        <begin position="30"/>
        <end position="41"/>
    </location>
</feature>
<feature type="strand" evidence="30">
    <location>
        <begin position="47"/>
        <end position="50"/>
    </location>
</feature>
<feature type="strand" evidence="30">
    <location>
        <begin position="53"/>
        <end position="65"/>
    </location>
</feature>
<feature type="strand" evidence="30">
    <location>
        <begin position="71"/>
        <end position="78"/>
    </location>
</feature>
<feature type="strand" evidence="30">
    <location>
        <begin position="81"/>
        <end position="84"/>
    </location>
</feature>
<feature type="helix" evidence="30">
    <location>
        <begin position="92"/>
        <end position="94"/>
    </location>
</feature>
<feature type="strand" evidence="30">
    <location>
        <begin position="99"/>
        <end position="101"/>
    </location>
</feature>
<feature type="strand" evidence="30">
    <location>
        <begin position="105"/>
        <end position="115"/>
    </location>
</feature>
<feature type="strand" evidence="30">
    <location>
        <begin position="123"/>
        <end position="131"/>
    </location>
</feature>
<feature type="strand" evidence="30">
    <location>
        <begin position="137"/>
        <end position="150"/>
    </location>
</feature>
<evidence type="ECO:0000250" key="1">
    <source>
        <dbReference type="UniProtKB" id="P79345"/>
    </source>
</evidence>
<evidence type="ECO:0000250" key="2">
    <source>
        <dbReference type="UniProtKB" id="Q9Z0J0"/>
    </source>
</evidence>
<evidence type="ECO:0000269" key="3">
    <source>
    </source>
</evidence>
<evidence type="ECO:0000269" key="4">
    <source>
    </source>
</evidence>
<evidence type="ECO:0000269" key="5">
    <source>
    </source>
</evidence>
<evidence type="ECO:0000269" key="6">
    <source>
    </source>
</evidence>
<evidence type="ECO:0000269" key="7">
    <source>
    </source>
</evidence>
<evidence type="ECO:0000269" key="8">
    <source>
    </source>
</evidence>
<evidence type="ECO:0000269" key="9">
    <source>
    </source>
</evidence>
<evidence type="ECO:0000269" key="10">
    <source>
    </source>
</evidence>
<evidence type="ECO:0000269" key="11">
    <source>
    </source>
</evidence>
<evidence type="ECO:0000269" key="12">
    <source>
    </source>
</evidence>
<evidence type="ECO:0000269" key="13">
    <source>
    </source>
</evidence>
<evidence type="ECO:0000269" key="14">
    <source>
    </source>
</evidence>
<evidence type="ECO:0000269" key="15">
    <source>
    </source>
</evidence>
<evidence type="ECO:0000269" key="16">
    <source>
    </source>
</evidence>
<evidence type="ECO:0000269" key="17">
    <source>
    </source>
</evidence>
<evidence type="ECO:0000269" key="18">
    <source>
    </source>
</evidence>
<evidence type="ECO:0000269" key="19">
    <source>
    </source>
</evidence>
<evidence type="ECO:0000269" key="20">
    <source>
    </source>
</evidence>
<evidence type="ECO:0000269" key="21">
    <source>
    </source>
</evidence>
<evidence type="ECO:0000303" key="22">
    <source>
    </source>
</evidence>
<evidence type="ECO:0000303" key="23">
    <source>
    </source>
</evidence>
<evidence type="ECO:0000303" key="24">
    <source>
    </source>
</evidence>
<evidence type="ECO:0000303" key="25">
    <source>
    </source>
</evidence>
<evidence type="ECO:0000305" key="26"/>
<evidence type="ECO:0000305" key="27">
    <source>
    </source>
</evidence>
<evidence type="ECO:0000312" key="28">
    <source>
        <dbReference type="HGNC" id="HGNC:14537"/>
    </source>
</evidence>
<evidence type="ECO:0007744" key="29">
    <source>
        <dbReference type="PDB" id="5KWY"/>
    </source>
</evidence>
<evidence type="ECO:0007829" key="30">
    <source>
        <dbReference type="PDB" id="5KWY"/>
    </source>
</evidence>
<protein>
    <recommendedName>
        <fullName evidence="28">NPC intracellular cholesterol transporter 2</fullName>
    </recommendedName>
    <alternativeName>
        <fullName>Epididymal secretory protein E1</fullName>
    </alternativeName>
    <alternativeName>
        <fullName>Human epididymis-specific protein 1</fullName>
        <shortName evidence="22 25">He1</shortName>
    </alternativeName>
    <alternativeName>
        <fullName evidence="24">Niemann-Pick disease type C2 protein</fullName>
    </alternativeName>
</protein>
<reference key="1">
    <citation type="journal article" date="1993" name="Mol. Reprod. Dev.">
        <title>Region-specific variation of gene expression in the human epididymis as revealed by in situ hybridization with tissue-specific cDNAs.</title>
        <authorList>
            <person name="Krull N."/>
            <person name="Ivell R."/>
            <person name="Osterhoff C."/>
            <person name="Kirchhoff C."/>
        </authorList>
    </citation>
    <scope>NUCLEOTIDE SEQUENCE [MRNA] (ISOFORM 1)</scope>
    <source>
        <tissue>Epididymis</tissue>
    </source>
</reference>
<reference key="2">
    <citation type="journal article" date="2004" name="Nat. Genet.">
        <title>Complete sequencing and characterization of 21,243 full-length human cDNAs.</title>
        <authorList>
            <person name="Ota T."/>
            <person name="Suzuki Y."/>
            <person name="Nishikawa T."/>
            <person name="Otsuki T."/>
            <person name="Sugiyama T."/>
            <person name="Irie R."/>
            <person name="Wakamatsu A."/>
            <person name="Hayashi K."/>
            <person name="Sato H."/>
            <person name="Nagai K."/>
            <person name="Kimura K."/>
            <person name="Makita H."/>
            <person name="Sekine M."/>
            <person name="Obayashi M."/>
            <person name="Nishi T."/>
            <person name="Shibahara T."/>
            <person name="Tanaka T."/>
            <person name="Ishii S."/>
            <person name="Yamamoto J."/>
            <person name="Saito K."/>
            <person name="Kawai Y."/>
            <person name="Isono Y."/>
            <person name="Nakamura Y."/>
            <person name="Nagahari K."/>
            <person name="Murakami K."/>
            <person name="Yasuda T."/>
            <person name="Iwayanagi T."/>
            <person name="Wagatsuma M."/>
            <person name="Shiratori A."/>
            <person name="Sudo H."/>
            <person name="Hosoiri T."/>
            <person name="Kaku Y."/>
            <person name="Kodaira H."/>
            <person name="Kondo H."/>
            <person name="Sugawara M."/>
            <person name="Takahashi M."/>
            <person name="Kanda K."/>
            <person name="Yokoi T."/>
            <person name="Furuya T."/>
            <person name="Kikkawa E."/>
            <person name="Omura Y."/>
            <person name="Abe K."/>
            <person name="Kamihara K."/>
            <person name="Katsuta N."/>
            <person name="Sato K."/>
            <person name="Tanikawa M."/>
            <person name="Yamazaki M."/>
            <person name="Ninomiya K."/>
            <person name="Ishibashi T."/>
            <person name="Yamashita H."/>
            <person name="Murakawa K."/>
            <person name="Fujimori K."/>
            <person name="Tanai H."/>
            <person name="Kimata M."/>
            <person name="Watanabe M."/>
            <person name="Hiraoka S."/>
            <person name="Chiba Y."/>
            <person name="Ishida S."/>
            <person name="Ono Y."/>
            <person name="Takiguchi S."/>
            <person name="Watanabe S."/>
            <person name="Yosida M."/>
            <person name="Hotuta T."/>
            <person name="Kusano J."/>
            <person name="Kanehori K."/>
            <person name="Takahashi-Fujii A."/>
            <person name="Hara H."/>
            <person name="Tanase T.-O."/>
            <person name="Nomura Y."/>
            <person name="Togiya S."/>
            <person name="Komai F."/>
            <person name="Hara R."/>
            <person name="Takeuchi K."/>
            <person name="Arita M."/>
            <person name="Imose N."/>
            <person name="Musashino K."/>
            <person name="Yuuki H."/>
            <person name="Oshima A."/>
            <person name="Sasaki N."/>
            <person name="Aotsuka S."/>
            <person name="Yoshikawa Y."/>
            <person name="Matsunawa H."/>
            <person name="Ichihara T."/>
            <person name="Shiohata N."/>
            <person name="Sano S."/>
            <person name="Moriya S."/>
            <person name="Momiyama H."/>
            <person name="Satoh N."/>
            <person name="Takami S."/>
            <person name="Terashima Y."/>
            <person name="Suzuki O."/>
            <person name="Nakagawa S."/>
            <person name="Senoh A."/>
            <person name="Mizoguchi H."/>
            <person name="Goto Y."/>
            <person name="Shimizu F."/>
            <person name="Wakebe H."/>
            <person name="Hishigaki H."/>
            <person name="Watanabe T."/>
            <person name="Sugiyama A."/>
            <person name="Takemoto M."/>
            <person name="Kawakami B."/>
            <person name="Yamazaki M."/>
            <person name="Watanabe K."/>
            <person name="Kumagai A."/>
            <person name="Itakura S."/>
            <person name="Fukuzumi Y."/>
            <person name="Fujimori Y."/>
            <person name="Komiyama M."/>
            <person name="Tashiro H."/>
            <person name="Tanigami A."/>
            <person name="Fujiwara T."/>
            <person name="Ono T."/>
            <person name="Yamada K."/>
            <person name="Fujii Y."/>
            <person name="Ozaki K."/>
            <person name="Hirao M."/>
            <person name="Ohmori Y."/>
            <person name="Kawabata A."/>
            <person name="Hikiji T."/>
            <person name="Kobatake N."/>
            <person name="Inagaki H."/>
            <person name="Ikema Y."/>
            <person name="Okamoto S."/>
            <person name="Okitani R."/>
            <person name="Kawakami T."/>
            <person name="Noguchi S."/>
            <person name="Itoh T."/>
            <person name="Shigeta K."/>
            <person name="Senba T."/>
            <person name="Matsumura K."/>
            <person name="Nakajima Y."/>
            <person name="Mizuno T."/>
            <person name="Morinaga M."/>
            <person name="Sasaki M."/>
            <person name="Togashi T."/>
            <person name="Oyama M."/>
            <person name="Hata H."/>
            <person name="Watanabe M."/>
            <person name="Komatsu T."/>
            <person name="Mizushima-Sugano J."/>
            <person name="Satoh T."/>
            <person name="Shirai Y."/>
            <person name="Takahashi Y."/>
            <person name="Nakagawa K."/>
            <person name="Okumura K."/>
            <person name="Nagase T."/>
            <person name="Nomura N."/>
            <person name="Kikuchi H."/>
            <person name="Masuho Y."/>
            <person name="Yamashita R."/>
            <person name="Nakai K."/>
            <person name="Yada T."/>
            <person name="Nakamura Y."/>
            <person name="Ohara O."/>
            <person name="Isogai T."/>
            <person name="Sugano S."/>
        </authorList>
    </citation>
    <scope>NUCLEOTIDE SEQUENCE [LARGE SCALE MRNA] (ISOFORM 2)</scope>
</reference>
<reference key="3">
    <citation type="journal article" date="2003" name="Nature">
        <title>The DNA sequence and analysis of human chromosome 14.</title>
        <authorList>
            <person name="Heilig R."/>
            <person name="Eckenberg R."/>
            <person name="Petit J.-L."/>
            <person name="Fonknechten N."/>
            <person name="Da Silva C."/>
            <person name="Cattolico L."/>
            <person name="Levy M."/>
            <person name="Barbe V."/>
            <person name="De Berardinis V."/>
            <person name="Ureta-Vidal A."/>
            <person name="Pelletier E."/>
            <person name="Vico V."/>
            <person name="Anthouard V."/>
            <person name="Rowen L."/>
            <person name="Madan A."/>
            <person name="Qin S."/>
            <person name="Sun H."/>
            <person name="Du H."/>
            <person name="Pepin K."/>
            <person name="Artiguenave F."/>
            <person name="Robert C."/>
            <person name="Cruaud C."/>
            <person name="Bruels T."/>
            <person name="Jaillon O."/>
            <person name="Friedlander L."/>
            <person name="Samson G."/>
            <person name="Brottier P."/>
            <person name="Cure S."/>
            <person name="Segurens B."/>
            <person name="Aniere F."/>
            <person name="Samain S."/>
            <person name="Crespeau H."/>
            <person name="Abbasi N."/>
            <person name="Aiach N."/>
            <person name="Boscus D."/>
            <person name="Dickhoff R."/>
            <person name="Dors M."/>
            <person name="Dubois I."/>
            <person name="Friedman C."/>
            <person name="Gouyvenoux M."/>
            <person name="James R."/>
            <person name="Madan A."/>
            <person name="Mairey-Estrada B."/>
            <person name="Mangenot S."/>
            <person name="Martins N."/>
            <person name="Menard M."/>
            <person name="Oztas S."/>
            <person name="Ratcliffe A."/>
            <person name="Shaffer T."/>
            <person name="Trask B."/>
            <person name="Vacherie B."/>
            <person name="Bellemere C."/>
            <person name="Belser C."/>
            <person name="Besnard-Gonnet M."/>
            <person name="Bartol-Mavel D."/>
            <person name="Boutard M."/>
            <person name="Briez-Silla S."/>
            <person name="Combette S."/>
            <person name="Dufosse-Laurent V."/>
            <person name="Ferron C."/>
            <person name="Lechaplais C."/>
            <person name="Louesse C."/>
            <person name="Muselet D."/>
            <person name="Magdelenat G."/>
            <person name="Pateau E."/>
            <person name="Petit E."/>
            <person name="Sirvain-Trukniewicz P."/>
            <person name="Trybou A."/>
            <person name="Vega-Czarny N."/>
            <person name="Bataille E."/>
            <person name="Bluet E."/>
            <person name="Bordelais I."/>
            <person name="Dubois M."/>
            <person name="Dumont C."/>
            <person name="Guerin T."/>
            <person name="Haffray S."/>
            <person name="Hammadi R."/>
            <person name="Muanga J."/>
            <person name="Pellouin V."/>
            <person name="Robert D."/>
            <person name="Wunderle E."/>
            <person name="Gauguet G."/>
            <person name="Roy A."/>
            <person name="Sainte-Marthe L."/>
            <person name="Verdier J."/>
            <person name="Verdier-Discala C."/>
            <person name="Hillier L.W."/>
            <person name="Fulton L."/>
            <person name="McPherson J."/>
            <person name="Matsuda F."/>
            <person name="Wilson R."/>
            <person name="Scarpelli C."/>
            <person name="Gyapay G."/>
            <person name="Wincker P."/>
            <person name="Saurin W."/>
            <person name="Quetier F."/>
            <person name="Waterston R."/>
            <person name="Hood L."/>
            <person name="Weissenbach J."/>
        </authorList>
    </citation>
    <scope>NUCLEOTIDE SEQUENCE [LARGE SCALE GENOMIC DNA]</scope>
</reference>
<reference key="4">
    <citation type="journal article" date="2004" name="Genome Res.">
        <title>The status, quality, and expansion of the NIH full-length cDNA project: the Mammalian Gene Collection (MGC).</title>
        <authorList>
            <consortium name="The MGC Project Team"/>
        </authorList>
    </citation>
    <scope>NUCLEOTIDE SEQUENCE [LARGE SCALE MRNA] (ISOFORM 1)</scope>
    <source>
        <tissue>Ovary</tissue>
    </source>
</reference>
<reference key="5">
    <citation type="journal article" date="2006" name="J. Biol. Chem.">
        <title>NPC2, the protein deficient in Niemann-Pick C2 disease, consists of multiple glycoforms that bind a variety of sterols.</title>
        <authorList>
            <person name="Liou H.L."/>
            <person name="Dixit S.S."/>
            <person name="Xu S."/>
            <person name="Tint G.S."/>
            <person name="Stock A.M."/>
            <person name="Lobel P."/>
        </authorList>
    </citation>
    <scope>PROTEIN SEQUENCE OF N-TERMINUS</scope>
    <scope>GLYCOSYLATION AT ASN-58 AND ASN-135</scope>
    <scope>FUNCTION</scope>
    <source>
        <tissue>Brain</tissue>
    </source>
</reference>
<reference key="6">
    <citation type="journal article" date="2000" name="Science">
        <title>Identification of HE1 as the second gene of Niemann-Pick C disease.</title>
        <authorList>
            <person name="Naureckiene S."/>
            <person name="Sleat D.E."/>
            <person name="Lackland H."/>
            <person name="Fensom A."/>
            <person name="Vanier M.T."/>
            <person name="Wattiaux R."/>
            <person name="Jadot M."/>
            <person name="Lobel P."/>
        </authorList>
    </citation>
    <scope>INVOLVEMENT IN NPC2</scope>
    <scope>PROTEIN SEQUENCE OF N-TERMINUS</scope>
    <scope>TISSUE SPECIFICITY</scope>
    <scope>SUBCELLULAR LOCATION</scope>
</reference>
<reference key="7">
    <citation type="journal article" date="2004" name="Biochem. Biophys. Res. Commun.">
        <title>In vivo interaction between the human dehydrodolichyl diphosphate synthase and the Niemann-Pick C2 protein revealed by a yeast two-hybrid system.</title>
        <authorList>
            <person name="Kharel Y."/>
            <person name="Takahashi S."/>
            <person name="Yamashita S."/>
            <person name="Koyama T."/>
        </authorList>
    </citation>
    <scope>INTERACTION WITH DHDDS</scope>
</reference>
<reference key="8">
    <citation type="journal article" date="2006" name="Cell. Microbiol.">
        <title>Transcriptomic and proteomic analyses of rhabdomyosarcoma cells reveal differential cellular gene expression in response to enterovirus 71 infection.</title>
        <authorList>
            <person name="Leong W.F."/>
            <person name="Chow V.T."/>
        </authorList>
    </citation>
    <scope>INDUCTION</scope>
    <scope>IDENTIFICATION BY MASS SPECTROMETRY</scope>
</reference>
<reference key="9">
    <citation type="journal article" date="2008" name="Biochemistry">
        <title>Regulation of sterol transport between membranes and NPC2.</title>
        <authorList>
            <person name="Xu Z."/>
            <person name="Farver W."/>
            <person name="Kodukula S."/>
            <person name="Storch J."/>
        </authorList>
    </citation>
    <scope>FUNCTION</scope>
</reference>
<reference key="10">
    <citation type="journal article" date="2008" name="Proc. Natl. Acad. Sci. U.S.A.">
        <title>NPC2 facilitates bidirectional transfer of cholesterol between NPC1 and lipid bilayers, a step in cholesterol egress from lysosomes.</title>
        <authorList>
            <person name="Infante R.E."/>
            <person name="Wang M.L."/>
            <person name="Radhakrishnan A."/>
            <person name="Kwon H.J."/>
            <person name="Brown M.S."/>
            <person name="Goldstein J.L."/>
        </authorList>
    </citation>
    <scope>FUNCTION</scope>
    <scope>INTERACTION WITH NPC1</scope>
    <scope>CHARACTERIZATION OF VARIANT NPC2 SER-120</scope>
    <scope>CATALYTIC ACTIVITY</scope>
</reference>
<reference key="11">
    <citation type="journal article" date="2009" name="Biochem. Biophys. Res. Commun.">
        <title>Identification of NPC2 protein as interaction molecule with C2 domain of human Nedd4L.</title>
        <authorList>
            <person name="Araki N."/>
            <person name="Ishigami T."/>
            <person name="Ushio H."/>
            <person name="Minegishi S."/>
            <person name="Umemura M."/>
            <person name="Miyagi Y."/>
            <person name="Aoki I."/>
            <person name="Morinaga H."/>
            <person name="Tamura K."/>
            <person name="Toya Y."/>
            <person name="Uchino K."/>
            <person name="Umemura S."/>
        </authorList>
    </citation>
    <scope>INTERACTION WITH NEDD4L</scope>
    <scope>TISSUE SPECIFICITY</scope>
</reference>
<reference key="12">
    <citation type="journal article" date="2009" name="Cell Metab.">
        <title>Nogo-B receptor stabilizes Niemann-Pick type C2 protein and regulates intracellular cholesterol trafficking.</title>
        <authorList>
            <person name="Harrison K.D."/>
            <person name="Miao R.Q."/>
            <person name="Fernandez-Hernando C."/>
            <person name="Suarez Y."/>
            <person name="Davalos A."/>
            <person name="Sessa W.C."/>
        </authorList>
    </citation>
    <scope>SUBCELLULAR LOCATION</scope>
    <scope>INTERACTION WITH NUS1</scope>
</reference>
<reference key="13">
    <citation type="journal article" date="2009" name="J. Proteome Res.">
        <title>Glycoproteomics analysis of human liver tissue by combination of multiple enzyme digestion and hydrazide chemistry.</title>
        <authorList>
            <person name="Chen R."/>
            <person name="Jiang X."/>
            <person name="Sun D."/>
            <person name="Han G."/>
            <person name="Wang F."/>
            <person name="Ye M."/>
            <person name="Wang L."/>
            <person name="Zou H."/>
        </authorList>
    </citation>
    <scope>GLYCOSYLATION [LARGE SCALE ANALYSIS] AT ASN-135</scope>
    <source>
        <tissue>Liver</tissue>
    </source>
</reference>
<reference key="14">
    <citation type="journal article" date="2011" name="BMC Syst. Biol.">
        <title>Initial characterization of the human central proteome.</title>
        <authorList>
            <person name="Burkard T.R."/>
            <person name="Planyavsky M."/>
            <person name="Kaupe I."/>
            <person name="Breitwieser F.P."/>
            <person name="Buerckstuemmer T."/>
            <person name="Bennett K.L."/>
            <person name="Superti-Furga G."/>
            <person name="Colinge J."/>
        </authorList>
    </citation>
    <scope>IDENTIFICATION BY MASS SPECTROMETRY [LARGE SCALE ANALYSIS]</scope>
</reference>
<reference key="15">
    <citation type="journal article" date="2011" name="Gastroenterology">
        <title>NPC2 regulates biliary cholesterol secretion via stimulation of ABCG5/G8-mediated cholesterol transport.</title>
        <authorList>
            <person name="Yamanashi Y."/>
            <person name="Takada T."/>
            <person name="Yoshikado T."/>
            <person name="Shoda J."/>
            <person name="Suzuki H."/>
        </authorList>
    </citation>
    <scope>TISSUE SPECIFICITY</scope>
    <scope>SUBCELLULAR LOCATION</scope>
</reference>
<reference key="16">
    <citation type="journal article" date="2012" name="Hepatology">
        <title>Novel function of Niemann-Pick C1-like 1 as a negative regulator of Niemann-Pick C2 protein.</title>
        <authorList>
            <person name="Yamanashi Y."/>
            <person name="Takada T."/>
            <person name="Shoda J."/>
            <person name="Suzuki H."/>
        </authorList>
    </citation>
    <scope>INTERACTION WITH NPC1L1</scope>
</reference>
<reference key="17">
    <citation type="journal article" date="2008" name="Proc. Natl. Acad. Sci. U.S.A.">
        <title>NPC1/NPC2 function as a tag team duo to mobilize cholesterol.</title>
        <authorList>
            <person name="Subramanian K."/>
            <person name="Balch W.E."/>
        </authorList>
    </citation>
    <scope>REVIEW ON FUNCTION</scope>
</reference>
<reference key="18">
    <citation type="journal article" date="2009" name="Biochim. Biophys. Acta">
        <title>Niemann-Pick C2 (NPC2) and intracellular cholesterol trafficking.</title>
        <authorList>
            <person name="Storch J."/>
            <person name="Xu Z."/>
        </authorList>
    </citation>
    <scope>REVIEW ON FUNCTION</scope>
</reference>
<reference key="19">
    <citation type="journal article" date="2010" name="Cell Metab.">
        <title>Transfer of cholesterol by the NPC team.</title>
        <authorList>
            <person name="Vance J.E."/>
        </authorList>
    </citation>
    <scope>REVIEW ON FUNCTION</scope>
</reference>
<reference key="20">
    <citation type="journal article" date="2011" name="Curr. Opin. Lipidol.">
        <title>Function of the Niemann-Pick type C proteins and their bypass by cyclodextrin.</title>
        <authorList>
            <person name="Vance J.E."/>
            <person name="Peake K.B."/>
        </authorList>
    </citation>
    <scope>REVIEW ON FUNCTION</scope>
</reference>
<reference key="21">
    <citation type="journal article" date="2014" name="J. Proteomics">
        <title>An enzyme assisted RP-RPLC approach for in-depth analysis of human liver phosphoproteome.</title>
        <authorList>
            <person name="Bian Y."/>
            <person name="Song C."/>
            <person name="Cheng K."/>
            <person name="Dong M."/>
            <person name="Wang F."/>
            <person name="Huang J."/>
            <person name="Sun D."/>
            <person name="Wang L."/>
            <person name="Ye M."/>
            <person name="Zou H."/>
        </authorList>
    </citation>
    <scope>IDENTIFICATION BY MASS SPECTROMETRY [LARGE SCALE ANALYSIS]</scope>
    <source>
        <tissue>Liver</tissue>
    </source>
</reference>
<reference key="22">
    <citation type="journal article" date="2015" name="Proteomics">
        <title>N-terminome analysis of the human mitochondrial proteome.</title>
        <authorList>
            <person name="Vaca Jacome A.S."/>
            <person name="Rabilloud T."/>
            <person name="Schaeffer-Reiss C."/>
            <person name="Rompais M."/>
            <person name="Ayoub D."/>
            <person name="Lane L."/>
            <person name="Bairoch A."/>
            <person name="Van Dorsselaer A."/>
            <person name="Carapito C."/>
        </authorList>
    </citation>
    <scope>IDENTIFICATION BY MASS SPECTROMETRY [LARGE SCALE ANALYSIS]</scope>
</reference>
<reference key="23">
    <citation type="journal article" date="2016" name="Cell">
        <title>Structural Insights into the Niemann-Pick C1 (NPC1)-Mediated Cholesterol Transfer and Ebola Infection.</title>
        <authorList>
            <person name="Gong X."/>
            <person name="Qian H."/>
            <person name="Zhou X."/>
            <person name="Wu J."/>
            <person name="Wan T."/>
            <person name="Cao P."/>
            <person name="Huang W."/>
            <person name="Zhao X."/>
            <person name="Wang X."/>
            <person name="Wang P."/>
            <person name="Shi Y."/>
            <person name="Gao G.F."/>
            <person name="Zhou Q."/>
            <person name="Yan N."/>
        </authorList>
    </citation>
    <scope>FUNCTION</scope>
    <scope>INTERACTION WITH NPC1</scope>
</reference>
<reference key="24">
    <citation type="journal article" date="2018" name="Chem. Phys. Lipids">
        <title>Niemann-Pick C2 protein regulates sterol transport between plasma membrane and late endosomes in human fibroblasts.</title>
        <authorList>
            <person name="Berzina Z."/>
            <person name="Solanko L.M."/>
            <person name="Mehadi A.S."/>
            <person name="Jensen M.L.V."/>
            <person name="Lund F.W."/>
            <person name="Modzel M."/>
            <person name="Szomek M."/>
            <person name="Solanko K.A."/>
            <person name="Dupont A."/>
            <person name="Nielsen G.K."/>
            <person name="Heegaard C.W."/>
            <person name="Ejsing C.S."/>
            <person name="Wuestner D."/>
        </authorList>
    </citation>
    <scope>FUNCTION</scope>
</reference>
<reference evidence="29" key="25">
    <citation type="journal article" date="2016" name="Proc. Natl. Acad. Sci. U.S.A.">
        <title>Clues to the mechanism of cholesterol transfer from the structure of NPC1 middle lumenal domain bound to NPC2.</title>
        <authorList>
            <person name="Li X."/>
            <person name="Saha P."/>
            <person name="Li J."/>
            <person name="Blobel G."/>
            <person name="Pfeffer S.R."/>
        </authorList>
    </citation>
    <scope>X-RAY CRYSTALLOGRAPHY (2.40 ANGSTROMS) OF 20-151 IN COMPLEX WITH CHOLESTEROL AND NPC1</scope>
    <scope>INTERACTION WITH NPC1</scope>
    <scope>GLYCOSYLATION AT ASN-58 AND ASN-135</scope>
    <scope>DISULFIDE BONDS</scope>
</reference>
<reference key="26">
    <citation type="journal article" date="2001" name="Am. J. Hum. Genet.">
        <title>Niemann-Pick disease type C: spectrum of HE1 mutations and genotype/phenotype correlations in the NPC2 group.</title>
        <authorList>
            <person name="Millat G."/>
            <person name="Chikh K."/>
            <person name="Naureckiene S."/>
            <person name="Sleat D.E."/>
            <person name="Fensom A.H."/>
            <person name="Higaki K."/>
            <person name="Elleder M."/>
            <person name="Lobel P."/>
            <person name="Vanier M.T."/>
        </authorList>
    </citation>
    <scope>VARIANT NPC2 PRO-67</scope>
</reference>
<reference key="27">
    <citation type="journal article" date="2002" name="Ann. Neurol.">
        <title>Frontal lobe atrophy due to a mutation in the cholesterol binding protein HE1/NPC2.</title>
        <authorList>
            <person name="Klunemann H.H."/>
            <person name="Elleder M."/>
            <person name="Kaminski W.E."/>
            <person name="Snow K."/>
            <person name="Peyser J.M."/>
            <person name="O'Brien J.F."/>
            <person name="Munoz D."/>
            <person name="Schmitz G."/>
            <person name="Klein H.E."/>
            <person name="Pendlebury W.W."/>
        </authorList>
    </citation>
    <scope>VARIANT NPC2 MET-39</scope>
</reference>
<reference key="28">
    <citation type="journal article" date="2003" name="Hum. Mutat.">
        <title>Identification of 58 novel mutations in Niemann-Pick disease type C: correlation with biochemical phenotype and importance of PTC1-like domains in NPC1.</title>
        <authorList>
            <person name="Park W.D."/>
            <person name="O'Brien J.F."/>
            <person name="Lundquist P.A."/>
            <person name="Kraft D.L."/>
            <person name="Vockley C.W."/>
            <person name="Karnes P.S."/>
            <person name="Patterson M.C."/>
            <person name="Snow K."/>
        </authorList>
    </citation>
    <scope>VARIANTS NPC2 MET-30; PHE-47 AND PHE-93</scope>
</reference>
<reference key="29">
    <citation type="journal article" date="2005" name="Hum. Mutat.">
        <title>Niemann-Pick type C disease: subcellular location and functional characterization of NPC2 proteins with naturally occurring missense mutations.</title>
        <authorList>
            <person name="Chikh K."/>
            <person name="Rodriguez C."/>
            <person name="Vey S."/>
            <person name="Vanier M.T."/>
            <person name="Millat G."/>
        </authorList>
    </citation>
    <scope>VARIANT NPC2 ARG-99</scope>
    <scope>CHARACTERIZATION OF VARIANTS NPC2 METH-39; PHE-47; PRO-67; PHE-93 AND ARG-99</scope>
    <scope>SUBCELLULAR LOCATION</scope>
    <scope>FUNCTION</scope>
</reference>
<reference key="30">
    <citation type="journal article" date="2005" name="Mol. Genet. Metab.">
        <title>Niemann-Pick C disease: use of denaturing high performance liquid chromatography for the detection of NPC1 and NPC2 genetic variations and impact on management of patients and families.</title>
        <authorList>
            <person name="Millat G."/>
            <person name="Baielo N."/>
            <person name="Molinero S."/>
            <person name="Rodriguez C."/>
            <person name="Chikh K."/>
            <person name="Vanier M.T."/>
        </authorList>
    </citation>
    <scope>VARIANT NPC2 SER-120</scope>
</reference>
<gene>
    <name evidence="28" type="primary">NPC2</name>
    <name type="synonym">HE1</name>
</gene>